<evidence type="ECO:0000250" key="1"/>
<evidence type="ECO:0000255" key="2"/>
<evidence type="ECO:0000305" key="3"/>
<accession>B6DCS6</accession>
<comment type="subcellular location">
    <subcellularLocation>
        <location evidence="1">Secreted</location>
    </subcellularLocation>
</comment>
<comment type="tissue specificity">
    <text>Expressed by the venom gland.</text>
</comment>
<comment type="domain">
    <text evidence="1">The presence of a 'disulfide through disulfide knot' structurally defines this protein as a knottin.</text>
</comment>
<comment type="similarity">
    <text evidence="3">Belongs to the neurotoxin 19 (CSTX) family. 01 subfamily.</text>
</comment>
<dbReference type="EMBL" id="EU926010">
    <property type="protein sequence ID" value="ACI41342.1"/>
    <property type="molecule type" value="mRNA"/>
</dbReference>
<dbReference type="EMBL" id="FM864014">
    <property type="protein sequence ID" value="CAS03612.1"/>
    <property type="molecule type" value="mRNA"/>
</dbReference>
<dbReference type="SMR" id="B6DCS6"/>
<dbReference type="ArachnoServer" id="AS000959">
    <property type="toxin name" value="U3-lycotoxin-Ls1o"/>
</dbReference>
<dbReference type="GO" id="GO:0005576">
    <property type="term" value="C:extracellular region"/>
    <property type="evidence" value="ECO:0007669"/>
    <property type="project" value="UniProtKB-SubCell"/>
</dbReference>
<dbReference type="GO" id="GO:0090729">
    <property type="term" value="F:toxin activity"/>
    <property type="evidence" value="ECO:0007669"/>
    <property type="project" value="UniProtKB-KW"/>
</dbReference>
<dbReference type="InterPro" id="IPR019553">
    <property type="entry name" value="Spider_toxin_CSTX_knottin"/>
</dbReference>
<dbReference type="InterPro" id="IPR011142">
    <property type="entry name" value="Spider_toxin_CSTX_Knottin_CS"/>
</dbReference>
<dbReference type="Pfam" id="PF10530">
    <property type="entry name" value="Toxin_35"/>
    <property type="match status" value="1"/>
</dbReference>
<dbReference type="PROSITE" id="PS60029">
    <property type="entry name" value="SPIDER_CSTX"/>
    <property type="match status" value="1"/>
</dbReference>
<keyword id="KW-1015">Disulfide bond</keyword>
<keyword id="KW-0960">Knottin</keyword>
<keyword id="KW-0964">Secreted</keyword>
<keyword id="KW-0732">Signal</keyword>
<keyword id="KW-0800">Toxin</keyword>
<protein>
    <recommendedName>
        <fullName>U3-lycotoxin-Ls1o</fullName>
    </recommendedName>
    <alternativeName>
        <fullName>Toxin-like structure LSTX-B31</fullName>
    </alternativeName>
</protein>
<reference key="1">
    <citation type="journal article" date="2010" name="Zoology">
        <title>Transcriptome analysis of the venom glands of the Chinese wolf spider Lycosa singoriensis.</title>
        <authorList>
            <person name="Zhang Y."/>
            <person name="Chen J."/>
            <person name="Tang X."/>
            <person name="Wang F."/>
            <person name="Jiang L."/>
            <person name="Xiong X."/>
            <person name="Wang M."/>
            <person name="Rong M."/>
            <person name="Liu Z."/>
            <person name="Liang S."/>
        </authorList>
    </citation>
    <scope>NUCLEOTIDE SEQUENCE [LARGE SCALE MRNA]</scope>
    <source>
        <tissue>Venom gland</tissue>
    </source>
</reference>
<sequence length="115" mass="13254">MKFVLLFGVLLVTLFSYSSAEMLDDFDQADEDELLSLIEKEEARAKECTPRFYDCSHDRHSCCRSELFKDVCTCFYPEGGDNEVCTCQQPKHLKYMEKAAGKAKKFGGKIRKWFG</sequence>
<proteinExistence type="evidence at transcript level"/>
<organism>
    <name type="scientific">Lycosa singoriensis</name>
    <name type="common">Wolf spider</name>
    <name type="synonym">Aranea singoriensis</name>
    <dbReference type="NCBI Taxonomy" id="434756"/>
    <lineage>
        <taxon>Eukaryota</taxon>
        <taxon>Metazoa</taxon>
        <taxon>Ecdysozoa</taxon>
        <taxon>Arthropoda</taxon>
        <taxon>Chelicerata</taxon>
        <taxon>Arachnida</taxon>
        <taxon>Araneae</taxon>
        <taxon>Araneomorphae</taxon>
        <taxon>Entelegynae</taxon>
        <taxon>Lycosoidea</taxon>
        <taxon>Lycosidae</taxon>
        <taxon>Lycosa</taxon>
    </lineage>
</organism>
<feature type="signal peptide" evidence="2">
    <location>
        <begin position="1"/>
        <end position="20"/>
    </location>
</feature>
<feature type="propeptide" id="PRO_0000401665" evidence="1">
    <location>
        <begin position="21"/>
        <end position="44"/>
    </location>
</feature>
<feature type="chain" id="PRO_0000401666" description="U3-lycotoxin-Ls1o">
    <location>
        <begin position="45"/>
        <end position="115"/>
    </location>
</feature>
<feature type="disulfide bond" evidence="1">
    <location>
        <begin position="48"/>
        <end position="63"/>
    </location>
</feature>
<feature type="disulfide bond" evidence="1">
    <location>
        <begin position="55"/>
        <end position="72"/>
    </location>
</feature>
<feature type="disulfide bond" evidence="1">
    <location>
        <begin position="62"/>
        <end position="87"/>
    </location>
</feature>
<feature type="disulfide bond" evidence="1">
    <location>
        <begin position="74"/>
        <end position="85"/>
    </location>
</feature>
<name>TX331_LYCSI</name>